<accession>Q93HX3</accession>
<name>NAPA_PARME</name>
<comment type="function">
    <text evidence="1">Catalytic subunit of the periplasmic nitrate reductase complex NapAB. Receives electrons from NapB and catalyzes the reduction of nitrate to nitrite.</text>
</comment>
<comment type="catalytic activity">
    <reaction evidence="1">
        <text>2 Fe(II)-[cytochrome] + nitrate + 2 H(+) = 2 Fe(III)-[cytochrome] + nitrite + H2O</text>
        <dbReference type="Rhea" id="RHEA:12909"/>
        <dbReference type="Rhea" id="RHEA-COMP:11777"/>
        <dbReference type="Rhea" id="RHEA-COMP:11778"/>
        <dbReference type="ChEBI" id="CHEBI:15377"/>
        <dbReference type="ChEBI" id="CHEBI:15378"/>
        <dbReference type="ChEBI" id="CHEBI:16301"/>
        <dbReference type="ChEBI" id="CHEBI:17632"/>
        <dbReference type="ChEBI" id="CHEBI:29033"/>
        <dbReference type="ChEBI" id="CHEBI:29034"/>
        <dbReference type="EC" id="1.9.6.1"/>
    </reaction>
</comment>
<comment type="cofactor">
    <cofactor evidence="1">
        <name>[4Fe-4S] cluster</name>
        <dbReference type="ChEBI" id="CHEBI:49883"/>
    </cofactor>
    <text evidence="1">Binds 1 [4Fe-4S] cluster.</text>
</comment>
<comment type="cofactor">
    <cofactor evidence="1">
        <name>Mo-bis(molybdopterin guanine dinucleotide)</name>
        <dbReference type="ChEBI" id="CHEBI:60539"/>
    </cofactor>
    <text evidence="1">Binds 1 molybdenum-bis(molybdopterin guanine dinucleotide) (Mo-bis-MGD) cofactor per subunit.</text>
</comment>
<comment type="subunit">
    <text evidence="1">Component of the periplasmic nitrate reductase NapAB complex composed of NapA and NapB.</text>
</comment>
<comment type="subcellular location">
    <subcellularLocation>
        <location evidence="1">Periplasm</location>
    </subcellularLocation>
</comment>
<comment type="PTM">
    <text evidence="1">Predicted to be exported by the Tat system. The position of the signal peptide cleavage has not been experimentally proven.</text>
</comment>
<comment type="similarity">
    <text evidence="1">Belongs to the prokaryotic molybdopterin-containing oxidoreductase family. NasA/NapA/NarB subfamily.</text>
</comment>
<keyword id="KW-0004">4Fe-4S</keyword>
<keyword id="KW-0249">Electron transport</keyword>
<keyword id="KW-0408">Iron</keyword>
<keyword id="KW-0411">Iron-sulfur</keyword>
<keyword id="KW-0479">Metal-binding</keyword>
<keyword id="KW-0500">Molybdenum</keyword>
<keyword id="KW-0534">Nitrate assimilation</keyword>
<keyword id="KW-0560">Oxidoreductase</keyword>
<keyword id="KW-0574">Periplasm</keyword>
<keyword id="KW-0732">Signal</keyword>
<keyword id="KW-0813">Transport</keyword>
<organism>
    <name type="scientific">Paramagnetospirillum magnetotacticum</name>
    <name type="common">Aquaspirillum magnetotacticum</name>
    <dbReference type="NCBI Taxonomy" id="188"/>
    <lineage>
        <taxon>Bacteria</taxon>
        <taxon>Pseudomonadati</taxon>
        <taxon>Pseudomonadota</taxon>
        <taxon>Alphaproteobacteria</taxon>
        <taxon>Rhodospirillales</taxon>
        <taxon>Magnetospirillaceae</taxon>
        <taxon>Paramagnetospirillum</taxon>
    </lineage>
</organism>
<gene>
    <name evidence="1" type="primary">napA</name>
</gene>
<dbReference type="EC" id="1.9.6.1" evidence="1"/>
<dbReference type="EMBL" id="AB055444">
    <property type="protein sequence ID" value="BAB59022.1"/>
    <property type="molecule type" value="Genomic_DNA"/>
</dbReference>
<dbReference type="SMR" id="Q93HX3"/>
<dbReference type="GO" id="GO:0016020">
    <property type="term" value="C:membrane"/>
    <property type="evidence" value="ECO:0007669"/>
    <property type="project" value="TreeGrafter"/>
</dbReference>
<dbReference type="GO" id="GO:0009325">
    <property type="term" value="C:nitrate reductase complex"/>
    <property type="evidence" value="ECO:0007669"/>
    <property type="project" value="TreeGrafter"/>
</dbReference>
<dbReference type="GO" id="GO:0042597">
    <property type="term" value="C:periplasmic space"/>
    <property type="evidence" value="ECO:0007669"/>
    <property type="project" value="UniProtKB-SubCell"/>
</dbReference>
<dbReference type="GO" id="GO:0051539">
    <property type="term" value="F:4 iron, 4 sulfur cluster binding"/>
    <property type="evidence" value="ECO:0007669"/>
    <property type="project" value="UniProtKB-KW"/>
</dbReference>
<dbReference type="GO" id="GO:0009055">
    <property type="term" value="F:electron transfer activity"/>
    <property type="evidence" value="ECO:0007669"/>
    <property type="project" value="UniProtKB-UniRule"/>
</dbReference>
<dbReference type="GO" id="GO:0005506">
    <property type="term" value="F:iron ion binding"/>
    <property type="evidence" value="ECO:0007669"/>
    <property type="project" value="UniProtKB-UniRule"/>
</dbReference>
<dbReference type="GO" id="GO:0030151">
    <property type="term" value="F:molybdenum ion binding"/>
    <property type="evidence" value="ECO:0007669"/>
    <property type="project" value="InterPro"/>
</dbReference>
<dbReference type="GO" id="GO:0043546">
    <property type="term" value="F:molybdopterin cofactor binding"/>
    <property type="evidence" value="ECO:0007669"/>
    <property type="project" value="InterPro"/>
</dbReference>
<dbReference type="GO" id="GO:0050140">
    <property type="term" value="F:nitrate reductase (cytochrome) activity"/>
    <property type="evidence" value="ECO:0007669"/>
    <property type="project" value="UniProtKB-EC"/>
</dbReference>
<dbReference type="GO" id="GO:0045333">
    <property type="term" value="P:cellular respiration"/>
    <property type="evidence" value="ECO:0007669"/>
    <property type="project" value="UniProtKB-ARBA"/>
</dbReference>
<dbReference type="GO" id="GO:0006777">
    <property type="term" value="P:Mo-molybdopterin cofactor biosynthetic process"/>
    <property type="evidence" value="ECO:0007669"/>
    <property type="project" value="UniProtKB-UniRule"/>
</dbReference>
<dbReference type="GO" id="GO:0042128">
    <property type="term" value="P:nitrate assimilation"/>
    <property type="evidence" value="ECO:0007669"/>
    <property type="project" value="UniProtKB-UniRule"/>
</dbReference>
<dbReference type="CDD" id="cd02791">
    <property type="entry name" value="MopB_CT_Nitrate-R-NapA-like"/>
    <property type="match status" value="1"/>
</dbReference>
<dbReference type="CDD" id="cd02754">
    <property type="entry name" value="MopB_Nitrate-R-NapA-like"/>
    <property type="match status" value="1"/>
</dbReference>
<dbReference type="FunFam" id="2.40.40.20:FF:000005">
    <property type="entry name" value="Periplasmic nitrate reductase"/>
    <property type="match status" value="1"/>
</dbReference>
<dbReference type="Gene3D" id="2.40.40.20">
    <property type="match status" value="1"/>
</dbReference>
<dbReference type="Gene3D" id="3.30.200.210">
    <property type="match status" value="1"/>
</dbReference>
<dbReference type="Gene3D" id="3.40.50.740">
    <property type="match status" value="1"/>
</dbReference>
<dbReference type="Gene3D" id="3.40.228.10">
    <property type="entry name" value="Dimethylsulfoxide Reductase, domain 2"/>
    <property type="match status" value="1"/>
</dbReference>
<dbReference type="HAMAP" id="MF_01630">
    <property type="entry name" value="Nitrate_reduct_NapA"/>
    <property type="match status" value="1"/>
</dbReference>
<dbReference type="InterPro" id="IPR009010">
    <property type="entry name" value="Asp_de-COase-like_dom_sf"/>
</dbReference>
<dbReference type="InterPro" id="IPR041957">
    <property type="entry name" value="CT_Nitrate-R-NapA-like"/>
</dbReference>
<dbReference type="InterPro" id="IPR006657">
    <property type="entry name" value="MoPterin_dinucl-bd_dom"/>
</dbReference>
<dbReference type="InterPro" id="IPR006656">
    <property type="entry name" value="Mopterin_OxRdtase"/>
</dbReference>
<dbReference type="InterPro" id="IPR006963">
    <property type="entry name" value="Mopterin_OxRdtase_4Fe-4S_dom"/>
</dbReference>
<dbReference type="InterPro" id="IPR010051">
    <property type="entry name" value="Periplasm_NO3_reductase_lsu"/>
</dbReference>
<dbReference type="InterPro" id="IPR050123">
    <property type="entry name" value="Prok_molybdopt-oxidoreductase"/>
</dbReference>
<dbReference type="InterPro" id="IPR006311">
    <property type="entry name" value="TAT_signal"/>
</dbReference>
<dbReference type="NCBIfam" id="TIGR01706">
    <property type="entry name" value="NAPA"/>
    <property type="match status" value="1"/>
</dbReference>
<dbReference type="NCBIfam" id="NF010055">
    <property type="entry name" value="PRK13532.1"/>
    <property type="match status" value="1"/>
</dbReference>
<dbReference type="PANTHER" id="PTHR43105:SF11">
    <property type="entry name" value="PERIPLASMIC NITRATE REDUCTASE"/>
    <property type="match status" value="1"/>
</dbReference>
<dbReference type="PANTHER" id="PTHR43105">
    <property type="entry name" value="RESPIRATORY NITRATE REDUCTASE"/>
    <property type="match status" value="1"/>
</dbReference>
<dbReference type="Pfam" id="PF04879">
    <property type="entry name" value="Molybdop_Fe4S4"/>
    <property type="match status" value="1"/>
</dbReference>
<dbReference type="Pfam" id="PF00384">
    <property type="entry name" value="Molybdopterin"/>
    <property type="match status" value="1"/>
</dbReference>
<dbReference type="Pfam" id="PF01568">
    <property type="entry name" value="Molydop_binding"/>
    <property type="match status" value="1"/>
</dbReference>
<dbReference type="SMART" id="SM00926">
    <property type="entry name" value="Molybdop_Fe4S4"/>
    <property type="match status" value="1"/>
</dbReference>
<dbReference type="SUPFAM" id="SSF50692">
    <property type="entry name" value="ADC-like"/>
    <property type="match status" value="1"/>
</dbReference>
<dbReference type="SUPFAM" id="SSF53706">
    <property type="entry name" value="Formate dehydrogenase/DMSO reductase, domains 1-3"/>
    <property type="match status" value="1"/>
</dbReference>
<dbReference type="PROSITE" id="PS51669">
    <property type="entry name" value="4FE4S_MOW_BIS_MGD"/>
    <property type="match status" value="1"/>
</dbReference>
<dbReference type="PROSITE" id="PS51318">
    <property type="entry name" value="TAT"/>
    <property type="match status" value="1"/>
</dbReference>
<proteinExistence type="inferred from homology"/>
<sequence>MSLTRRDFIKANAVPATAAAAGLATPAIAQPAKANIRWDKGVCRFCGTGCSVLVGVQDGRVVATQGDPDSPVNRGLNCIKGYFLSKIMYGEDRLTRPLLRMKDGKFDKNGEFQPISWDQAFDIMAEKWKEQLKKPDGVTRVGMFGSGQWTIWEGYAASKLYKAGFRSNNLDPNARHCMASAVAGFMRTFGIDEPMGCYDDIEQTDAFVLWGSNMAEMHPILWSRVTDRRLTHEGCKVAVLSTFEHRSFELADIPMVFTPQTDLAILNYICHYIISKNAYNKEFIDKHVNFKKGATDIGYGLRPTHALEKDQANAATPDKADPMTFDEFKAFVAEYTVEKVSKLSGVPADKLEALAKLYADPKVKVVSFWTMGFNQHTRGTWVNNMIYNVHLLMGKISEPGNSPFSLTGQPSACGTAREVGTFAHRLPADMVVMNDKHREIAERCWKLPAGTINPKIGYHAVLQHRMLKDGKLNAYWVMCTNNMQTAPNMNEEGYPGYRNPANFIVVSDPYPTVTALAADLILPTAMWMEKEGAYGNAERRTQFWAPEGQGSGRGRSDLWQIMEFSKRFKIEEVWPEELIAKKPELRGKTLFEVLYKNGQVDKFPLTELQAGFENDEAKAFGFYPQKGLFEEYASFGRGHAHDLAPFESYHKARGLRWPVVDGKETLWRFREGYDPYVKAGEGVKFYGKPDGKAWIFALPYAPAAESPDKDFDLWLSTGRVLEHWHSGSMTRRVPELHKSVPNAVLYMHPNDAAKRNLRNGDVVKVASRRGEVTTRIDTRGRNKPPEGLVFMPFFDESQLVNKLTLDATCPISKETDYKKCAVKVSKA</sequence>
<feature type="signal peptide" description="Tat-type signal" evidence="1">
    <location>
        <begin position="1"/>
        <end position="34"/>
    </location>
</feature>
<feature type="chain" id="PRO_0000045990" description="Periplasmic nitrate reductase" evidence="1">
    <location>
        <begin position="35"/>
        <end position="827"/>
    </location>
</feature>
<feature type="domain" description="4Fe-4S Mo/W bis-MGD-type" evidence="1">
    <location>
        <begin position="36"/>
        <end position="92"/>
    </location>
</feature>
<feature type="binding site" evidence="1">
    <location>
        <position position="43"/>
    </location>
    <ligand>
        <name>[4Fe-4S] cluster</name>
        <dbReference type="ChEBI" id="CHEBI:49883"/>
    </ligand>
</feature>
<feature type="binding site" evidence="1">
    <location>
        <position position="46"/>
    </location>
    <ligand>
        <name>[4Fe-4S] cluster</name>
        <dbReference type="ChEBI" id="CHEBI:49883"/>
    </ligand>
</feature>
<feature type="binding site" evidence="1">
    <location>
        <position position="50"/>
    </location>
    <ligand>
        <name>[4Fe-4S] cluster</name>
        <dbReference type="ChEBI" id="CHEBI:49883"/>
    </ligand>
</feature>
<feature type="binding site" evidence="1">
    <location>
        <position position="78"/>
    </location>
    <ligand>
        <name>[4Fe-4S] cluster</name>
        <dbReference type="ChEBI" id="CHEBI:49883"/>
    </ligand>
</feature>
<feature type="binding site" evidence="1">
    <location>
        <position position="80"/>
    </location>
    <ligand>
        <name>Mo-bis(molybdopterin guanine dinucleotide)</name>
        <dbReference type="ChEBI" id="CHEBI:60539"/>
    </ligand>
</feature>
<feature type="binding site" evidence="1">
    <location>
        <position position="148"/>
    </location>
    <ligand>
        <name>Mo-bis(molybdopterin guanine dinucleotide)</name>
        <dbReference type="ChEBI" id="CHEBI:60539"/>
    </ligand>
</feature>
<feature type="binding site" evidence="1">
    <location>
        <position position="173"/>
    </location>
    <ligand>
        <name>Mo-bis(molybdopterin guanine dinucleotide)</name>
        <dbReference type="ChEBI" id="CHEBI:60539"/>
    </ligand>
</feature>
<feature type="binding site" evidence="1">
    <location>
        <position position="177"/>
    </location>
    <ligand>
        <name>Mo-bis(molybdopterin guanine dinucleotide)</name>
        <dbReference type="ChEBI" id="CHEBI:60539"/>
    </ligand>
</feature>
<feature type="binding site" evidence="1">
    <location>
        <begin position="210"/>
        <end position="217"/>
    </location>
    <ligand>
        <name>Mo-bis(molybdopterin guanine dinucleotide)</name>
        <dbReference type="ChEBI" id="CHEBI:60539"/>
    </ligand>
</feature>
<feature type="binding site" evidence="1">
    <location>
        <begin position="241"/>
        <end position="245"/>
    </location>
    <ligand>
        <name>Mo-bis(molybdopterin guanine dinucleotide)</name>
        <dbReference type="ChEBI" id="CHEBI:60539"/>
    </ligand>
</feature>
<feature type="binding site" evidence="1">
    <location>
        <begin position="260"/>
        <end position="262"/>
    </location>
    <ligand>
        <name>Mo-bis(molybdopterin guanine dinucleotide)</name>
        <dbReference type="ChEBI" id="CHEBI:60539"/>
    </ligand>
</feature>
<feature type="binding site" evidence="1">
    <location>
        <position position="371"/>
    </location>
    <ligand>
        <name>Mo-bis(molybdopterin guanine dinucleotide)</name>
        <dbReference type="ChEBI" id="CHEBI:60539"/>
    </ligand>
</feature>
<feature type="binding site" evidence="1">
    <location>
        <position position="375"/>
    </location>
    <ligand>
        <name>Mo-bis(molybdopterin guanine dinucleotide)</name>
        <dbReference type="ChEBI" id="CHEBI:60539"/>
    </ligand>
</feature>
<feature type="binding site" evidence="1">
    <location>
        <position position="481"/>
    </location>
    <ligand>
        <name>Mo-bis(molybdopterin guanine dinucleotide)</name>
        <dbReference type="ChEBI" id="CHEBI:60539"/>
    </ligand>
</feature>
<feature type="binding site" evidence="1">
    <location>
        <begin position="507"/>
        <end position="508"/>
    </location>
    <ligand>
        <name>Mo-bis(molybdopterin guanine dinucleotide)</name>
        <dbReference type="ChEBI" id="CHEBI:60539"/>
    </ligand>
</feature>
<feature type="binding site" evidence="1">
    <location>
        <position position="530"/>
    </location>
    <ligand>
        <name>Mo-bis(molybdopterin guanine dinucleotide)</name>
        <dbReference type="ChEBI" id="CHEBI:60539"/>
    </ligand>
</feature>
<feature type="binding site" evidence="1">
    <location>
        <position position="557"/>
    </location>
    <ligand>
        <name>Mo-bis(molybdopterin guanine dinucleotide)</name>
        <dbReference type="ChEBI" id="CHEBI:60539"/>
    </ligand>
</feature>
<feature type="binding site" evidence="1">
    <location>
        <begin position="717"/>
        <end position="726"/>
    </location>
    <ligand>
        <name>Mo-bis(molybdopterin guanine dinucleotide)</name>
        <dbReference type="ChEBI" id="CHEBI:60539"/>
    </ligand>
</feature>
<feature type="binding site" evidence="1">
    <location>
        <position position="793"/>
    </location>
    <ligand>
        <name>substrate</name>
    </ligand>
</feature>
<feature type="binding site" evidence="1">
    <location>
        <position position="801"/>
    </location>
    <ligand>
        <name>Mo-bis(molybdopterin guanine dinucleotide)</name>
        <dbReference type="ChEBI" id="CHEBI:60539"/>
    </ligand>
</feature>
<feature type="binding site" evidence="1">
    <location>
        <position position="818"/>
    </location>
    <ligand>
        <name>Mo-bis(molybdopterin guanine dinucleotide)</name>
        <dbReference type="ChEBI" id="CHEBI:60539"/>
    </ligand>
</feature>
<protein>
    <recommendedName>
        <fullName evidence="1">Periplasmic nitrate reductase</fullName>
        <ecNumber evidence="1">1.9.6.1</ecNumber>
    </recommendedName>
</protein>
<evidence type="ECO:0000255" key="1">
    <source>
        <dbReference type="HAMAP-Rule" id="MF_01630"/>
    </source>
</evidence>
<reference key="1">
    <citation type="submission" date="2001-02" db="EMBL/GenBank/DDBJ databases">
        <title>Cloning and sequencing of periplasmic nitrate reductase gene cluster from magnetotactic bacterium Magnetospirillum magnetotacticum.</title>
        <authorList>
            <person name="Taoka A."/>
            <person name="Fukumori Y."/>
        </authorList>
    </citation>
    <scope>NUCLEOTIDE SEQUENCE [GENOMIC DNA]</scope>
    <source>
        <strain>ATCC 31632 / DSM 3856 / JCM 21281 / NBRC 15272 / NCIMB 12542 / MS-1</strain>
    </source>
</reference>